<dbReference type="EC" id="2.8.3.16" evidence="2"/>
<dbReference type="EMBL" id="CP000800">
    <property type="protein sequence ID" value="ABV18483.1"/>
    <property type="molecule type" value="Genomic_DNA"/>
</dbReference>
<dbReference type="RefSeq" id="WP_000106759.1">
    <property type="nucleotide sequence ID" value="NC_009801.1"/>
</dbReference>
<dbReference type="SMR" id="A7ZPI2"/>
<dbReference type="GeneID" id="75202557"/>
<dbReference type="KEGG" id="ecw:EcE24377A_2662"/>
<dbReference type="HOGENOM" id="CLU_033975_2_1_6"/>
<dbReference type="UniPathway" id="UPA00540">
    <property type="reaction ID" value="UER00598"/>
</dbReference>
<dbReference type="Proteomes" id="UP000001122">
    <property type="component" value="Chromosome"/>
</dbReference>
<dbReference type="GO" id="GO:0033608">
    <property type="term" value="F:formyl-CoA transferase activity"/>
    <property type="evidence" value="ECO:0007669"/>
    <property type="project" value="UniProtKB-EC"/>
</dbReference>
<dbReference type="GO" id="GO:0033611">
    <property type="term" value="P:oxalate catabolic process"/>
    <property type="evidence" value="ECO:0007669"/>
    <property type="project" value="UniProtKB-UniRule"/>
</dbReference>
<dbReference type="Gene3D" id="3.40.50.10540">
    <property type="entry name" value="Crotonobetainyl-coa:carnitine coa-transferase, domain 1"/>
    <property type="match status" value="1"/>
</dbReference>
<dbReference type="Gene3D" id="3.30.1540.10">
    <property type="entry name" value="formyl-coa transferase, domain 3"/>
    <property type="match status" value="1"/>
</dbReference>
<dbReference type="HAMAP" id="MF_00742">
    <property type="entry name" value="Formyl_CoA_transfer"/>
    <property type="match status" value="1"/>
</dbReference>
<dbReference type="InterPro" id="IPR050483">
    <property type="entry name" value="CoA-transferase_III_domain"/>
</dbReference>
<dbReference type="InterPro" id="IPR003673">
    <property type="entry name" value="CoA-Trfase_fam_III"/>
</dbReference>
<dbReference type="InterPro" id="IPR044855">
    <property type="entry name" value="CoA-Trfase_III_dom3_sf"/>
</dbReference>
<dbReference type="InterPro" id="IPR023606">
    <property type="entry name" value="CoA-Trfase_III_dom_1_sf"/>
</dbReference>
<dbReference type="InterPro" id="IPR017659">
    <property type="entry name" value="Formyl_CoA_transfer"/>
</dbReference>
<dbReference type="NCBIfam" id="TIGR03253">
    <property type="entry name" value="oxalate_frc"/>
    <property type="match status" value="1"/>
</dbReference>
<dbReference type="NCBIfam" id="NF003809">
    <property type="entry name" value="PRK05398.1"/>
    <property type="match status" value="1"/>
</dbReference>
<dbReference type="PANTHER" id="PTHR48207">
    <property type="entry name" value="SUCCINATE--HYDROXYMETHYLGLUTARATE COA-TRANSFERASE"/>
    <property type="match status" value="1"/>
</dbReference>
<dbReference type="PANTHER" id="PTHR48207:SF3">
    <property type="entry name" value="SUCCINATE--HYDROXYMETHYLGLUTARATE COA-TRANSFERASE"/>
    <property type="match status" value="1"/>
</dbReference>
<dbReference type="Pfam" id="PF02515">
    <property type="entry name" value="CoA_transf_3"/>
    <property type="match status" value="1"/>
</dbReference>
<dbReference type="SUPFAM" id="SSF89796">
    <property type="entry name" value="CoA-transferase family III (CaiB/BaiF)"/>
    <property type="match status" value="1"/>
</dbReference>
<gene>
    <name evidence="2" type="primary">frc</name>
    <name type="ordered locus">EcE24377A_2662</name>
</gene>
<organism>
    <name type="scientific">Escherichia coli O139:H28 (strain E24377A / ETEC)</name>
    <dbReference type="NCBI Taxonomy" id="331111"/>
    <lineage>
        <taxon>Bacteria</taxon>
        <taxon>Pseudomonadati</taxon>
        <taxon>Pseudomonadota</taxon>
        <taxon>Gammaproteobacteria</taxon>
        <taxon>Enterobacterales</taxon>
        <taxon>Enterobacteriaceae</taxon>
        <taxon>Escherichia</taxon>
    </lineage>
</organism>
<comment type="function">
    <text evidence="1">Involved in the catabolism of oxalate and in the adapatation to low pH via the induction of the oxalate-dependent acid tolerance response (ATR). Catalyzes the transfer of the CoA moiety from formyl-CoA to oxalate (By similarity).</text>
</comment>
<comment type="catalytic activity">
    <reaction evidence="2">
        <text>formyl-CoA + oxalate = oxalyl-CoA + formate</text>
        <dbReference type="Rhea" id="RHEA:16545"/>
        <dbReference type="ChEBI" id="CHEBI:15740"/>
        <dbReference type="ChEBI" id="CHEBI:30623"/>
        <dbReference type="ChEBI" id="CHEBI:57376"/>
        <dbReference type="ChEBI" id="CHEBI:57388"/>
        <dbReference type="EC" id="2.8.3.16"/>
    </reaction>
</comment>
<comment type="pathway">
    <text evidence="2">Metabolic intermediate degradation; oxalate degradation; CO(2) and formate from oxalate: step 1/2.</text>
</comment>
<comment type="subunit">
    <text evidence="2">Homodimer.</text>
</comment>
<comment type="similarity">
    <text evidence="2">Belongs to the CoA-transferase III family. Frc subfamily.</text>
</comment>
<sequence length="416" mass="45828">MSTPLQGIKVLDFTGVQSGPSCTQMLAWFGADVIKIERPGVGDVTRHQLRDIPDIDALYFTMLNSNKRSIELNTKTAEGKEVMEKLIREADILVENFHPGAIDHMGFTWEHIQEINPRLIFGSIKGFDECSPYVNVKAYENVAQAAGGAASTTGFWDGPPLVSAAALGDSNTGMHLLIGLLAALLHREKTGRGQRVTMSMQDAVLNLCRVKLRDQQRLDKLGYLEEYPQYPNGTFGDAVPRGGNAGGGGQPGWILKCKGWETDPNAYIYFTIQEQNWENTCKAIGKPEWITDPAYSTAHARQPHIFDIFAEIEKYTVTIDKHEAVAYLTQFDIPCAPVLSMKEISLDPSLRQSGSVVEVEQPLRGKYLTVGCPMKFSAFTPDIKAAPLLGEHTAAVLQELGYSDDEIAAMKQNHAI</sequence>
<proteinExistence type="inferred from homology"/>
<accession>A7ZPI2</accession>
<reference key="1">
    <citation type="journal article" date="2008" name="J. Bacteriol.">
        <title>The pangenome structure of Escherichia coli: comparative genomic analysis of E. coli commensal and pathogenic isolates.</title>
        <authorList>
            <person name="Rasko D.A."/>
            <person name="Rosovitz M.J."/>
            <person name="Myers G.S.A."/>
            <person name="Mongodin E.F."/>
            <person name="Fricke W.F."/>
            <person name="Gajer P."/>
            <person name="Crabtree J."/>
            <person name="Sebaihia M."/>
            <person name="Thomson N.R."/>
            <person name="Chaudhuri R."/>
            <person name="Henderson I.R."/>
            <person name="Sperandio V."/>
            <person name="Ravel J."/>
        </authorList>
    </citation>
    <scope>NUCLEOTIDE SEQUENCE [LARGE SCALE GENOMIC DNA]</scope>
    <source>
        <strain>E24377A / ETEC</strain>
    </source>
</reference>
<name>FCTA_ECO24</name>
<feature type="chain" id="PRO_1000062168" description="Formyl-CoA:oxalate CoA-transferase">
    <location>
        <begin position="1"/>
        <end position="416"/>
    </location>
</feature>
<feature type="active site" description="Nucleophile" evidence="2">
    <location>
        <position position="169"/>
    </location>
</feature>
<feature type="binding site" evidence="1">
    <location>
        <begin position="17"/>
        <end position="18"/>
    </location>
    <ligand>
        <name>CoA</name>
        <dbReference type="ChEBI" id="CHEBI:57287"/>
    </ligand>
</feature>
<feature type="binding site" evidence="2">
    <location>
        <position position="38"/>
    </location>
    <ligand>
        <name>CoA</name>
        <dbReference type="ChEBI" id="CHEBI:57287"/>
    </ligand>
</feature>
<feature type="binding site" evidence="1">
    <location>
        <begin position="72"/>
        <end position="75"/>
    </location>
    <ligand>
        <name>CoA</name>
        <dbReference type="ChEBI" id="CHEBI:57287"/>
    </ligand>
</feature>
<feature type="binding site" evidence="1">
    <location>
        <begin position="96"/>
        <end position="98"/>
    </location>
    <ligand>
        <name>CoA</name>
        <dbReference type="ChEBI" id="CHEBI:57287"/>
    </ligand>
</feature>
<feature type="binding site" evidence="2">
    <location>
        <position position="104"/>
    </location>
    <ligand>
        <name>CoA</name>
        <dbReference type="ChEBI" id="CHEBI:57287"/>
    </ligand>
</feature>
<feature type="binding site" evidence="1">
    <location>
        <begin position="137"/>
        <end position="140"/>
    </location>
    <ligand>
        <name>CoA</name>
        <dbReference type="ChEBI" id="CHEBI:57287"/>
    </ligand>
</feature>
<feature type="binding site" evidence="1">
    <location>
        <begin position="248"/>
        <end position="250"/>
    </location>
    <ligand>
        <name>substrate</name>
    </ligand>
</feature>
<feature type="binding site" evidence="1">
    <location>
        <begin position="273"/>
        <end position="275"/>
    </location>
    <ligand>
        <name>CoA</name>
        <dbReference type="ChEBI" id="CHEBI:57287"/>
    </ligand>
</feature>
<protein>
    <recommendedName>
        <fullName>Formyl-CoA:oxalate CoA-transferase</fullName>
        <shortName>FCOCT</shortName>
        <ecNumber evidence="2">2.8.3.16</ecNumber>
    </recommendedName>
    <alternativeName>
        <fullName evidence="2">Formyl-coenzyme A transferase</fullName>
        <shortName evidence="2">Formyl-CoA transferase</shortName>
    </alternativeName>
</protein>
<evidence type="ECO:0000250" key="1"/>
<evidence type="ECO:0000255" key="2">
    <source>
        <dbReference type="HAMAP-Rule" id="MF_00742"/>
    </source>
</evidence>
<keyword id="KW-1185">Reference proteome</keyword>
<keyword id="KW-0808">Transferase</keyword>